<name>NEP_I84A2</name>
<keyword id="KW-0025">Alternative splicing</keyword>
<keyword id="KW-1048">Host nucleus</keyword>
<keyword id="KW-0945">Host-virus interaction</keyword>
<keyword id="KW-0813">Transport</keyword>
<keyword id="KW-0946">Virion</keyword>
<accession>P0C2M1</accession>
<dbReference type="EMBL" id="M80952">
    <property type="status" value="NOT_ANNOTATED_CDS"/>
    <property type="molecule type" value="Genomic_RNA"/>
</dbReference>
<dbReference type="SMR" id="P0C2M1"/>
<dbReference type="GO" id="GO:0042025">
    <property type="term" value="C:host cell nucleus"/>
    <property type="evidence" value="ECO:0007669"/>
    <property type="project" value="UniProtKB-SubCell"/>
</dbReference>
<dbReference type="GO" id="GO:0044423">
    <property type="term" value="C:virion component"/>
    <property type="evidence" value="ECO:0007669"/>
    <property type="project" value="UniProtKB-UniRule"/>
</dbReference>
<dbReference type="GO" id="GO:0039675">
    <property type="term" value="P:exit of virus from host cell nucleus through nuclear pore"/>
    <property type="evidence" value="ECO:0007669"/>
    <property type="project" value="UniProtKB-UniRule"/>
</dbReference>
<dbReference type="Gene3D" id="1.10.287.230">
    <property type="match status" value="1"/>
</dbReference>
<dbReference type="Gene3D" id="1.10.287.10">
    <property type="entry name" value="S15/NS1, RNA-binding"/>
    <property type="match status" value="1"/>
</dbReference>
<dbReference type="HAMAP" id="MF_04067">
    <property type="entry name" value="INFV_NEP"/>
    <property type="match status" value="1"/>
</dbReference>
<dbReference type="InterPro" id="IPR000968">
    <property type="entry name" value="Flu_NS2"/>
</dbReference>
<dbReference type="Pfam" id="PF00601">
    <property type="entry name" value="Flu_NS2"/>
    <property type="match status" value="1"/>
</dbReference>
<dbReference type="SUPFAM" id="SSF101156">
    <property type="entry name" value="Nonstructural protein ns2, Nep, M1-binding domain"/>
    <property type="match status" value="1"/>
</dbReference>
<reference key="1">
    <citation type="journal article" date="1998" name="Virus Res.">
        <title>Influence of host species on the evolution of the nonstructural (NS) gene of influenza A viruses.</title>
        <authorList>
            <person name="Kawaoka Y."/>
            <person name="Gorman O.T."/>
            <person name="Ito T."/>
            <person name="Wells K."/>
            <person name="Donis R.O."/>
            <person name="Castrucci M.R."/>
            <person name="Donatelli I."/>
            <person name="Webster R.G."/>
        </authorList>
    </citation>
    <scope>NUCLEOTIDE SEQUENCE [GENOMIC RNA]</scope>
</reference>
<protein>
    <recommendedName>
        <fullName evidence="1">Nuclear export protein</fullName>
        <shortName evidence="1">NEP</shortName>
    </recommendedName>
    <alternativeName>
        <fullName evidence="1">Non-structural protein 2</fullName>
        <shortName evidence="1">NS2</shortName>
    </alternativeName>
</protein>
<sequence>MDSNTVSSFQDILMRMSKMQLGSSSEDLNGMITQFESLKLYRDSLGEAVMRMGDLHSLQSRNGKWREQLSQKFEEIRWLIEEVRHRLKITESSFEQITFMQALQLLLEVEQEIRTFSFQLI</sequence>
<comment type="function">
    <text evidence="1">Mediates the nuclear export of encapsidated genomic RNAs (ribonucleoproteins, RNPs). Acts as an adapter between viral RNPs complexes and the nuclear export machinery of the cell. Possesses no intrinsic RNA-binding activity, but includes a C-terminal M1-binding domain. This domain is believed to allow recognition of RNPs bound to the protein M1. Since protein M1 is not available in large quantities before late stages of infection, such an indirect recognition mechanism probably ensures that genomic RNPs are not exported from the host nucleus until sufficient quantities of viral mRNA and progeny genomic RNA have been synthesized. Furthermore, the RNPs enter the host cytoplasm only when associated with the M1 protein that is necessary to guide them to the plasma membrane. May down-regulate viral RNA synthesis when overproduced.</text>
</comment>
<comment type="subunit">
    <text evidence="1">Interacts with protein M1. May interact with host nucleoporin RAB/HRB and exportin XPO1/CRM1.</text>
</comment>
<comment type="subcellular location">
    <subcellularLocation>
        <location evidence="1">Virion</location>
    </subcellularLocation>
    <subcellularLocation>
        <location evidence="1">Host nucleus</location>
    </subcellularLocation>
</comment>
<comment type="alternative products">
    <event type="alternative splicing"/>
    <isoform>
        <id>P0C2M1-1</id>
        <name>NEP</name>
        <name>NS2</name>
        <sequence type="displayed"/>
    </isoform>
    <isoform>
        <id>Q9YPE7-1</id>
        <name>NS1</name>
        <sequence type="external"/>
    </isoform>
</comment>
<comment type="miscellaneous">
    <text>Average number present in a viral particle is estimated to be 130-200 molecules.</text>
</comment>
<comment type="similarity">
    <text evidence="1">Belongs to the influenza viruses NEP family.</text>
</comment>
<proteinExistence type="inferred from homology"/>
<feature type="chain" id="PRO_0000281023" description="Nuclear export protein">
    <location>
        <begin position="1"/>
        <end position="121"/>
    </location>
</feature>
<feature type="short sequence motif" description="Nuclear export signal" evidence="1">
    <location>
        <begin position="12"/>
        <end position="21"/>
    </location>
</feature>
<feature type="short sequence motif" description="Nuclear export signal" evidence="1">
    <location>
        <begin position="85"/>
        <end position="94"/>
    </location>
</feature>
<organism>
    <name type="scientific">Influenza A virus (strain A/Whale/Maine/328/1984 H13N2)</name>
    <dbReference type="NCBI Taxonomy" id="385593"/>
    <lineage>
        <taxon>Viruses</taxon>
        <taxon>Riboviria</taxon>
        <taxon>Orthornavirae</taxon>
        <taxon>Negarnaviricota</taxon>
        <taxon>Polyploviricotina</taxon>
        <taxon>Insthoviricetes</taxon>
        <taxon>Articulavirales</taxon>
        <taxon>Orthomyxoviridae</taxon>
        <taxon>Alphainfluenzavirus</taxon>
        <taxon>Alphainfluenzavirus influenzae</taxon>
        <taxon>Influenza A virus</taxon>
    </lineage>
</organism>
<organismHost>
    <name type="scientific">Aves</name>
    <dbReference type="NCBI Taxonomy" id="8782"/>
</organismHost>
<organismHost>
    <name type="scientific">Cetacea</name>
    <name type="common">whales</name>
    <dbReference type="NCBI Taxonomy" id="9721"/>
</organismHost>
<evidence type="ECO:0000255" key="1">
    <source>
        <dbReference type="HAMAP-Rule" id="MF_04067"/>
    </source>
</evidence>
<gene>
    <name evidence="1" type="primary">NS</name>
</gene>